<name>MENH_SALCH</name>
<organism>
    <name type="scientific">Salmonella choleraesuis (strain SC-B67)</name>
    <dbReference type="NCBI Taxonomy" id="321314"/>
    <lineage>
        <taxon>Bacteria</taxon>
        <taxon>Pseudomonadati</taxon>
        <taxon>Pseudomonadota</taxon>
        <taxon>Gammaproteobacteria</taxon>
        <taxon>Enterobacterales</taxon>
        <taxon>Enterobacteriaceae</taxon>
        <taxon>Salmonella</taxon>
    </lineage>
</organism>
<evidence type="ECO:0000255" key="1">
    <source>
        <dbReference type="HAMAP-Rule" id="MF_01660"/>
    </source>
</evidence>
<protein>
    <recommendedName>
        <fullName evidence="1">2-succinyl-6-hydroxy-2,4-cyclohexadiene-1-carboxylate synthase</fullName>
        <shortName evidence="1">SHCHC synthase</shortName>
        <ecNumber evidence="1">4.2.99.20</ecNumber>
    </recommendedName>
</protein>
<feature type="chain" id="PRO_0000341918" description="2-succinyl-6-hydroxy-2,4-cyclohexadiene-1-carboxylate synthase">
    <location>
        <begin position="1"/>
        <end position="252"/>
    </location>
</feature>
<reference key="1">
    <citation type="journal article" date="2005" name="Nucleic Acids Res.">
        <title>The genome sequence of Salmonella enterica serovar Choleraesuis, a highly invasive and resistant zoonotic pathogen.</title>
        <authorList>
            <person name="Chiu C.-H."/>
            <person name="Tang P."/>
            <person name="Chu C."/>
            <person name="Hu S."/>
            <person name="Bao Q."/>
            <person name="Yu J."/>
            <person name="Chou Y.-Y."/>
            <person name="Wang H.-S."/>
            <person name="Lee Y.-S."/>
        </authorList>
    </citation>
    <scope>NUCLEOTIDE SEQUENCE [LARGE SCALE GENOMIC DNA]</scope>
    <source>
        <strain>SC-B67</strain>
    </source>
</reference>
<comment type="function">
    <text evidence="1">Catalyzes a proton abstraction reaction that results in 2,5-elimination of pyruvate from 2-succinyl-5-enolpyruvyl-6-hydroxy-3-cyclohexene-1-carboxylate (SEPHCHC) and the formation of 2-succinyl-6-hydroxy-2,4-cyclohexadiene-1-carboxylate (SHCHC).</text>
</comment>
<comment type="catalytic activity">
    <reaction evidence="1">
        <text>5-enolpyruvoyl-6-hydroxy-2-succinyl-cyclohex-3-ene-1-carboxylate = (1R,6R)-6-hydroxy-2-succinyl-cyclohexa-2,4-diene-1-carboxylate + pyruvate</text>
        <dbReference type="Rhea" id="RHEA:25597"/>
        <dbReference type="ChEBI" id="CHEBI:15361"/>
        <dbReference type="ChEBI" id="CHEBI:58689"/>
        <dbReference type="ChEBI" id="CHEBI:58818"/>
        <dbReference type="EC" id="4.2.99.20"/>
    </reaction>
</comment>
<comment type="pathway">
    <text evidence="1">Quinol/quinone metabolism; 1,4-dihydroxy-2-naphthoate biosynthesis; 1,4-dihydroxy-2-naphthoate from chorismate: step 3/7.</text>
</comment>
<comment type="pathway">
    <text evidence="1">Quinol/quinone metabolism; menaquinone biosynthesis.</text>
</comment>
<comment type="subunit">
    <text evidence="1">Monomer.</text>
</comment>
<comment type="similarity">
    <text evidence="1">Belongs to the AB hydrolase superfamily. MenH family.</text>
</comment>
<keyword id="KW-0456">Lyase</keyword>
<keyword id="KW-0474">Menaquinone biosynthesis</keyword>
<gene>
    <name evidence="1" type="primary">menH</name>
    <name type="ordered locus">SCH_2308</name>
</gene>
<dbReference type="EC" id="4.2.99.20" evidence="1"/>
<dbReference type="EMBL" id="AE017220">
    <property type="protein sequence ID" value="AAX66214.1"/>
    <property type="molecule type" value="Genomic_DNA"/>
</dbReference>
<dbReference type="RefSeq" id="WP_000979141.1">
    <property type="nucleotide sequence ID" value="NC_006905.1"/>
</dbReference>
<dbReference type="SMR" id="Q57M48"/>
<dbReference type="ESTHER" id="salty-YFBB">
    <property type="family name" value="MenH_SHCHC"/>
</dbReference>
<dbReference type="KEGG" id="sec:SCH_2308"/>
<dbReference type="HOGENOM" id="CLU_020336_38_2_6"/>
<dbReference type="UniPathway" id="UPA00079"/>
<dbReference type="UniPathway" id="UPA01057">
    <property type="reaction ID" value="UER00900"/>
</dbReference>
<dbReference type="Proteomes" id="UP000000538">
    <property type="component" value="Chromosome"/>
</dbReference>
<dbReference type="GO" id="GO:0070205">
    <property type="term" value="F:2-succinyl-6-hydroxy-2,4-cyclohexadiene-1-carboxylate synthase activity"/>
    <property type="evidence" value="ECO:0007669"/>
    <property type="project" value="UniProtKB-UniRule"/>
</dbReference>
<dbReference type="GO" id="GO:0009234">
    <property type="term" value="P:menaquinone biosynthetic process"/>
    <property type="evidence" value="ECO:0007669"/>
    <property type="project" value="UniProtKB-UniRule"/>
</dbReference>
<dbReference type="Gene3D" id="3.40.50.1820">
    <property type="entry name" value="alpha/beta hydrolase"/>
    <property type="match status" value="1"/>
</dbReference>
<dbReference type="HAMAP" id="MF_01660">
    <property type="entry name" value="MenH"/>
    <property type="match status" value="1"/>
</dbReference>
<dbReference type="InterPro" id="IPR000073">
    <property type="entry name" value="AB_hydrolase_1"/>
</dbReference>
<dbReference type="InterPro" id="IPR029058">
    <property type="entry name" value="AB_hydrolase_fold"/>
</dbReference>
<dbReference type="InterPro" id="IPR022485">
    <property type="entry name" value="SHCHC_synthase_MenH"/>
</dbReference>
<dbReference type="NCBIfam" id="TIGR03695">
    <property type="entry name" value="menH_SHCHC"/>
    <property type="match status" value="1"/>
</dbReference>
<dbReference type="NCBIfam" id="NF008340">
    <property type="entry name" value="PRK11126.1"/>
    <property type="match status" value="1"/>
</dbReference>
<dbReference type="PANTHER" id="PTHR42916">
    <property type="entry name" value="2-SUCCINYL-5-ENOLPYRUVYL-6-HYDROXY-3-CYCLOHEXENE-1-CARBOXYLATE SYNTHASE"/>
    <property type="match status" value="1"/>
</dbReference>
<dbReference type="PANTHER" id="PTHR42916:SF1">
    <property type="entry name" value="PROTEIN PHYLLO, CHLOROPLASTIC"/>
    <property type="match status" value="1"/>
</dbReference>
<dbReference type="Pfam" id="PF12697">
    <property type="entry name" value="Abhydrolase_6"/>
    <property type="match status" value="1"/>
</dbReference>
<dbReference type="SUPFAM" id="SSF53474">
    <property type="entry name" value="alpha/beta-Hydrolases"/>
    <property type="match status" value="1"/>
</dbReference>
<sequence length="252" mass="27713">MMLHAQHMPGQPGAPSLVFLHGFSGDCREWQPVGEQFHGCSRLYIDLPGHGGSAAIPVGRFADVIRLLRATLISYNILKFWLVGYSLGGRVAMMAACQGIPGLCGLVVEGGHPGLQNEQARAERRLSDGRWAERFRREPLTEVFHDWYQQPVFASLTAQQRQALTALRSQNNGETLAAMLEATSLAAQPDLREALNALAFPFYYLCGERDSKFRALAQEVAATCHVIRNAGHNAHRENPAGVVDSLAQILRL</sequence>
<accession>Q57M48</accession>
<proteinExistence type="inferred from homology"/>